<organism>
    <name type="scientific">Dictyostelium discoideum</name>
    <name type="common">Social amoeba</name>
    <dbReference type="NCBI Taxonomy" id="44689"/>
    <lineage>
        <taxon>Eukaryota</taxon>
        <taxon>Amoebozoa</taxon>
        <taxon>Evosea</taxon>
        <taxon>Eumycetozoa</taxon>
        <taxon>Dictyostelia</taxon>
        <taxon>Dictyosteliales</taxon>
        <taxon>Dictyosteliaceae</taxon>
        <taxon>Dictyostelium</taxon>
    </lineage>
</organism>
<evidence type="ECO:0000255" key="1">
    <source>
        <dbReference type="PROSITE-ProRule" id="PRU00125"/>
    </source>
</evidence>
<evidence type="ECO:0000255" key="2">
    <source>
        <dbReference type="PROSITE-ProRule" id="PRU00159"/>
    </source>
</evidence>
<evidence type="ECO:0000255" key="3">
    <source>
        <dbReference type="PROSITE-ProRule" id="PRU10027"/>
    </source>
</evidence>
<evidence type="ECO:0000256" key="4">
    <source>
        <dbReference type="SAM" id="MobiDB-lite"/>
    </source>
</evidence>
<evidence type="ECO:0000305" key="5"/>
<feature type="chain" id="PRO_0000391335" description="Probable LIM domain-containing serine/threonine-protein kinase DDB_G0286997">
    <location>
        <begin position="1"/>
        <end position="966"/>
    </location>
</feature>
<feature type="domain" description="LIM zinc-binding 1" evidence="1">
    <location>
        <begin position="3"/>
        <end position="62"/>
    </location>
</feature>
<feature type="domain" description="LIM zinc-binding 2" evidence="1">
    <location>
        <begin position="63"/>
        <end position="120"/>
    </location>
</feature>
<feature type="domain" description="Protein kinase" evidence="2">
    <location>
        <begin position="702"/>
        <end position="959"/>
    </location>
</feature>
<feature type="region of interest" description="Disordered" evidence="4">
    <location>
        <begin position="208"/>
        <end position="291"/>
    </location>
</feature>
<feature type="region of interest" description="Disordered" evidence="4">
    <location>
        <begin position="331"/>
        <end position="588"/>
    </location>
</feature>
<feature type="compositionally biased region" description="Low complexity" evidence="4">
    <location>
        <begin position="211"/>
        <end position="231"/>
    </location>
</feature>
<feature type="compositionally biased region" description="Polar residues" evidence="4">
    <location>
        <begin position="232"/>
        <end position="269"/>
    </location>
</feature>
<feature type="compositionally biased region" description="Low complexity" evidence="4">
    <location>
        <begin position="270"/>
        <end position="284"/>
    </location>
</feature>
<feature type="compositionally biased region" description="Low complexity" evidence="4">
    <location>
        <begin position="331"/>
        <end position="350"/>
    </location>
</feature>
<feature type="compositionally biased region" description="Polar residues" evidence="4">
    <location>
        <begin position="374"/>
        <end position="389"/>
    </location>
</feature>
<feature type="compositionally biased region" description="Pro residues" evidence="4">
    <location>
        <begin position="419"/>
        <end position="430"/>
    </location>
</feature>
<feature type="compositionally biased region" description="Low complexity" evidence="4">
    <location>
        <begin position="431"/>
        <end position="449"/>
    </location>
</feature>
<feature type="compositionally biased region" description="Pro residues" evidence="4">
    <location>
        <begin position="490"/>
        <end position="511"/>
    </location>
</feature>
<feature type="compositionally biased region" description="Polar residues" evidence="4">
    <location>
        <begin position="513"/>
        <end position="526"/>
    </location>
</feature>
<feature type="compositionally biased region" description="Low complexity" evidence="4">
    <location>
        <begin position="543"/>
        <end position="560"/>
    </location>
</feature>
<feature type="compositionally biased region" description="Pro residues" evidence="4">
    <location>
        <begin position="561"/>
        <end position="570"/>
    </location>
</feature>
<feature type="active site" description="Proton acceptor" evidence="2 3">
    <location>
        <position position="825"/>
    </location>
</feature>
<feature type="binding site" evidence="2">
    <location>
        <begin position="708"/>
        <end position="716"/>
    </location>
    <ligand>
        <name>ATP</name>
        <dbReference type="ChEBI" id="CHEBI:30616"/>
    </ligand>
</feature>
<feature type="binding site" evidence="2">
    <location>
        <position position="729"/>
    </location>
    <ligand>
        <name>ATP</name>
        <dbReference type="ChEBI" id="CHEBI:30616"/>
    </ligand>
</feature>
<dbReference type="EC" id="2.7.11.1"/>
<dbReference type="EMBL" id="AAFI02000094">
    <property type="status" value="NOT_ANNOTATED_CDS"/>
    <property type="molecule type" value="Genomic_DNA"/>
</dbReference>
<dbReference type="EMBL" id="AAFI02000095">
    <property type="status" value="NOT_ANNOTATED_CDS"/>
    <property type="molecule type" value="Genomic_DNA"/>
</dbReference>
<dbReference type="SMR" id="P0CD62"/>
<dbReference type="GlyGen" id="P0CD62">
    <property type="glycosylation" value="2 sites"/>
</dbReference>
<dbReference type="dictyBase" id="DDB_G0286997"/>
<dbReference type="VEuPathDB" id="AmoebaDB:DDB_G0287001"/>
<dbReference type="InParanoid" id="P0CD62"/>
<dbReference type="OMA" id="ICKCELP"/>
<dbReference type="PRO" id="PR:P0CD62"/>
<dbReference type="Proteomes" id="UP000002195">
    <property type="component" value="Chromosome 4"/>
</dbReference>
<dbReference type="GO" id="GO:0005737">
    <property type="term" value="C:cytoplasm"/>
    <property type="evidence" value="ECO:0000318"/>
    <property type="project" value="GO_Central"/>
</dbReference>
<dbReference type="GO" id="GO:0005524">
    <property type="term" value="F:ATP binding"/>
    <property type="evidence" value="ECO:0007669"/>
    <property type="project" value="UniProtKB-KW"/>
</dbReference>
<dbReference type="GO" id="GO:0046872">
    <property type="term" value="F:metal ion binding"/>
    <property type="evidence" value="ECO:0007669"/>
    <property type="project" value="UniProtKB-KW"/>
</dbReference>
<dbReference type="GO" id="GO:0004672">
    <property type="term" value="F:protein kinase activity"/>
    <property type="evidence" value="ECO:0000318"/>
    <property type="project" value="GO_Central"/>
</dbReference>
<dbReference type="GO" id="GO:0106310">
    <property type="term" value="F:protein serine kinase activity"/>
    <property type="evidence" value="ECO:0007669"/>
    <property type="project" value="RHEA"/>
</dbReference>
<dbReference type="GO" id="GO:0004674">
    <property type="term" value="F:protein serine/threonine kinase activity"/>
    <property type="evidence" value="ECO:0007669"/>
    <property type="project" value="UniProtKB-KW"/>
</dbReference>
<dbReference type="GO" id="GO:0007165">
    <property type="term" value="P:signal transduction"/>
    <property type="evidence" value="ECO:0000318"/>
    <property type="project" value="GO_Central"/>
</dbReference>
<dbReference type="CDD" id="cd13999">
    <property type="entry name" value="STKc_MAP3K-like"/>
    <property type="match status" value="1"/>
</dbReference>
<dbReference type="Gene3D" id="2.10.110.10">
    <property type="entry name" value="Cysteine Rich Protein"/>
    <property type="match status" value="1"/>
</dbReference>
<dbReference type="Gene3D" id="1.10.510.10">
    <property type="entry name" value="Transferase(Phosphotransferase) domain 1"/>
    <property type="match status" value="1"/>
</dbReference>
<dbReference type="InterPro" id="IPR011009">
    <property type="entry name" value="Kinase-like_dom_sf"/>
</dbReference>
<dbReference type="InterPro" id="IPR000719">
    <property type="entry name" value="Prot_kinase_dom"/>
</dbReference>
<dbReference type="InterPro" id="IPR001245">
    <property type="entry name" value="Ser-Thr/Tyr_kinase_cat_dom"/>
</dbReference>
<dbReference type="InterPro" id="IPR008271">
    <property type="entry name" value="Ser/Thr_kinase_AS"/>
</dbReference>
<dbReference type="InterPro" id="IPR051681">
    <property type="entry name" value="Ser/Thr_Kinases-Pseudokinases"/>
</dbReference>
<dbReference type="InterPro" id="IPR001781">
    <property type="entry name" value="Znf_LIM"/>
</dbReference>
<dbReference type="PANTHER" id="PTHR44329:SF288">
    <property type="entry name" value="MITOGEN-ACTIVATED PROTEIN KINASE KINASE KINASE 20"/>
    <property type="match status" value="1"/>
</dbReference>
<dbReference type="PANTHER" id="PTHR44329">
    <property type="entry name" value="SERINE/THREONINE-PROTEIN KINASE TNNI3K-RELATED"/>
    <property type="match status" value="1"/>
</dbReference>
<dbReference type="Pfam" id="PF00412">
    <property type="entry name" value="LIM"/>
    <property type="match status" value="1"/>
</dbReference>
<dbReference type="Pfam" id="PF07714">
    <property type="entry name" value="PK_Tyr_Ser-Thr"/>
    <property type="match status" value="1"/>
</dbReference>
<dbReference type="PRINTS" id="PR01217">
    <property type="entry name" value="PRICHEXTENSN"/>
</dbReference>
<dbReference type="PRINTS" id="PR00109">
    <property type="entry name" value="TYRKINASE"/>
</dbReference>
<dbReference type="SMART" id="SM00132">
    <property type="entry name" value="LIM"/>
    <property type="match status" value="2"/>
</dbReference>
<dbReference type="SMART" id="SM00220">
    <property type="entry name" value="S_TKc"/>
    <property type="match status" value="1"/>
</dbReference>
<dbReference type="SUPFAM" id="SSF57716">
    <property type="entry name" value="Glucocorticoid receptor-like (DNA-binding domain)"/>
    <property type="match status" value="1"/>
</dbReference>
<dbReference type="SUPFAM" id="SSF56112">
    <property type="entry name" value="Protein kinase-like (PK-like)"/>
    <property type="match status" value="1"/>
</dbReference>
<dbReference type="PROSITE" id="PS00478">
    <property type="entry name" value="LIM_DOMAIN_1"/>
    <property type="match status" value="1"/>
</dbReference>
<dbReference type="PROSITE" id="PS50023">
    <property type="entry name" value="LIM_DOMAIN_2"/>
    <property type="match status" value="2"/>
</dbReference>
<dbReference type="PROSITE" id="PS50011">
    <property type="entry name" value="PROTEIN_KINASE_DOM"/>
    <property type="match status" value="1"/>
</dbReference>
<dbReference type="PROSITE" id="PS00108">
    <property type="entry name" value="PROTEIN_KINASE_ST"/>
    <property type="match status" value="1"/>
</dbReference>
<reference key="1">
    <citation type="journal article" date="2005" name="Nature">
        <title>The genome of the social amoeba Dictyostelium discoideum.</title>
        <authorList>
            <person name="Eichinger L."/>
            <person name="Pachebat J.A."/>
            <person name="Gloeckner G."/>
            <person name="Rajandream M.A."/>
            <person name="Sucgang R."/>
            <person name="Berriman M."/>
            <person name="Song J."/>
            <person name="Olsen R."/>
            <person name="Szafranski K."/>
            <person name="Xu Q."/>
            <person name="Tunggal B."/>
            <person name="Kummerfeld S."/>
            <person name="Madera M."/>
            <person name="Konfortov B.A."/>
            <person name="Rivero F."/>
            <person name="Bankier A.T."/>
            <person name="Lehmann R."/>
            <person name="Hamlin N."/>
            <person name="Davies R."/>
            <person name="Gaudet P."/>
            <person name="Fey P."/>
            <person name="Pilcher K."/>
            <person name="Chen G."/>
            <person name="Saunders D."/>
            <person name="Sodergren E.J."/>
            <person name="Davis P."/>
            <person name="Kerhornou A."/>
            <person name="Nie X."/>
            <person name="Hall N."/>
            <person name="Anjard C."/>
            <person name="Hemphill L."/>
            <person name="Bason N."/>
            <person name="Farbrother P."/>
            <person name="Desany B."/>
            <person name="Just E."/>
            <person name="Morio T."/>
            <person name="Rost R."/>
            <person name="Churcher C.M."/>
            <person name="Cooper J."/>
            <person name="Haydock S."/>
            <person name="van Driessche N."/>
            <person name="Cronin A."/>
            <person name="Goodhead I."/>
            <person name="Muzny D.M."/>
            <person name="Mourier T."/>
            <person name="Pain A."/>
            <person name="Lu M."/>
            <person name="Harper D."/>
            <person name="Lindsay R."/>
            <person name="Hauser H."/>
            <person name="James K.D."/>
            <person name="Quiles M."/>
            <person name="Madan Babu M."/>
            <person name="Saito T."/>
            <person name="Buchrieser C."/>
            <person name="Wardroper A."/>
            <person name="Felder M."/>
            <person name="Thangavelu M."/>
            <person name="Johnson D."/>
            <person name="Knights A."/>
            <person name="Loulseged H."/>
            <person name="Mungall K.L."/>
            <person name="Oliver K."/>
            <person name="Price C."/>
            <person name="Quail M.A."/>
            <person name="Urushihara H."/>
            <person name="Hernandez J."/>
            <person name="Rabbinowitsch E."/>
            <person name="Steffen D."/>
            <person name="Sanders M."/>
            <person name="Ma J."/>
            <person name="Kohara Y."/>
            <person name="Sharp S."/>
            <person name="Simmonds M.N."/>
            <person name="Spiegler S."/>
            <person name="Tivey A."/>
            <person name="Sugano S."/>
            <person name="White B."/>
            <person name="Walker D."/>
            <person name="Woodward J.R."/>
            <person name="Winckler T."/>
            <person name="Tanaka Y."/>
            <person name="Shaulsky G."/>
            <person name="Schleicher M."/>
            <person name="Weinstock G.M."/>
            <person name="Rosenthal A."/>
            <person name="Cox E.C."/>
            <person name="Chisholm R.L."/>
            <person name="Gibbs R.A."/>
            <person name="Loomis W.F."/>
            <person name="Platzer M."/>
            <person name="Kay R.R."/>
            <person name="Williams J.G."/>
            <person name="Dear P.H."/>
            <person name="Noegel A.A."/>
            <person name="Barrell B.G."/>
            <person name="Kuspa A."/>
        </authorList>
    </citation>
    <scope>NUCLEOTIDE SEQUENCE [LARGE SCALE GENOMIC DNA]</scope>
    <source>
        <strain>AX4</strain>
    </source>
</reference>
<accession>P0CD62</accession>
<sequence length="966" mass="107219">MDSRCGVCKYIISDCERYVSDNTFYHVKCFICKICKCELPPCFRGKHASLMCGDCEIKLNAPKCFKSHFPIHSVSVVARNKEFHNNCFTCISCNEIIKGGFQYSDELFYCSKCDIIKPPPLPPPLIYKAPIATSKATTSITSPLPTKIPILSTANLIPPLSSSSPLATQISPKTSTIATTTVETTTAETTLPSPFKISQLKNSGDNIYSLSSPSSSSSSSSSSSSSSSSPPNTFNKSSDFLRNPLNNNVKSSSSSIGGNFVNKSQQQQQPIDSCSKSSISISPSSPRPTEDDIKEQVFLLQKQSVQLQIQQQLQQRQIEQLNKNQLGVQKPLNQQPQQQQQQFKPQSPNLSNNDTLDSFSNLNQSLPPPPLINTTTFSNPLLKTKNQSFPTPPTSHIIKENQSQQIPKPSSIDEVDQLPLPPPPITPIPSPSSSSIIINNQQQQQQESQLPPPPPTSIIIDQSILLPPPPPSTEILPQQQSPKLYKPRPKPIVLPPPPLDMEQLPLPPPPLLSSQINQSLKSTQHNQTTSPTIEIPIPPPLPIQKQSIPTRKPQLPQSSNPSPPSPPSPQPSSNIPPLSPKQQQEQQVEPIFSPTGSIIPTPPPPPPIFKMKPLRPQKFRAPTNYIPSLSLHRANKLSNSTEDHIKPPESLVLESSRIEKFEPTINGRKLTELLKHQTFDDIVGEVLNKRISIYKQLVKDDVIFGDVIAAGASGKVYKGIYKGRDVAIKVYSSENFCFNIDEFDREVTIMSLIDSDHPNFTRFYGANKQNKKYLFHVSELVKSGSLRDLLLDKEKPLLYFTQLSIASDIANAMKHLHSIGVIHRDLKSLNVLITEDFTAKVIDFGTSRNVDLAKHMTMNLGTSCYMSPELFKGNGYDETCDVYAFGIVLWEIIARKEPYENINSWSIPVMVAKGDRPTIPADCPSEYSKLIKACWTDKPKKRPSFKEICDTLKKISESLTLKRNKK</sequence>
<keyword id="KW-0067">ATP-binding</keyword>
<keyword id="KW-0418">Kinase</keyword>
<keyword id="KW-0440">LIM domain</keyword>
<keyword id="KW-0479">Metal-binding</keyword>
<keyword id="KW-0547">Nucleotide-binding</keyword>
<keyword id="KW-1185">Reference proteome</keyword>
<keyword id="KW-0677">Repeat</keyword>
<keyword id="KW-0723">Serine/threonine-protein kinase</keyword>
<keyword id="KW-0808">Transferase</keyword>
<keyword id="KW-0862">Zinc</keyword>
<gene>
    <name type="ORF">DDB_G0286997</name>
</gene>
<comment type="catalytic activity">
    <reaction>
        <text>L-seryl-[protein] + ATP = O-phospho-L-seryl-[protein] + ADP + H(+)</text>
        <dbReference type="Rhea" id="RHEA:17989"/>
        <dbReference type="Rhea" id="RHEA-COMP:9863"/>
        <dbReference type="Rhea" id="RHEA-COMP:11604"/>
        <dbReference type="ChEBI" id="CHEBI:15378"/>
        <dbReference type="ChEBI" id="CHEBI:29999"/>
        <dbReference type="ChEBI" id="CHEBI:30616"/>
        <dbReference type="ChEBI" id="CHEBI:83421"/>
        <dbReference type="ChEBI" id="CHEBI:456216"/>
        <dbReference type="EC" id="2.7.11.1"/>
    </reaction>
</comment>
<comment type="catalytic activity">
    <reaction>
        <text>L-threonyl-[protein] + ATP = O-phospho-L-threonyl-[protein] + ADP + H(+)</text>
        <dbReference type="Rhea" id="RHEA:46608"/>
        <dbReference type="Rhea" id="RHEA-COMP:11060"/>
        <dbReference type="Rhea" id="RHEA-COMP:11605"/>
        <dbReference type="ChEBI" id="CHEBI:15378"/>
        <dbReference type="ChEBI" id="CHEBI:30013"/>
        <dbReference type="ChEBI" id="CHEBI:30616"/>
        <dbReference type="ChEBI" id="CHEBI:61977"/>
        <dbReference type="ChEBI" id="CHEBI:456216"/>
        <dbReference type="EC" id="2.7.11.1"/>
    </reaction>
</comment>
<comment type="similarity">
    <text evidence="5">Belongs to the protein kinase superfamily. TKL Ser/Thr protein kinase family.</text>
</comment>
<name>LIMKB_DICDI</name>
<proteinExistence type="inferred from homology"/>
<protein>
    <recommendedName>
        <fullName>Probable LIM domain-containing serine/threonine-protein kinase DDB_G0286997</fullName>
        <ecNumber>2.7.11.1</ecNumber>
    </recommendedName>
</protein>